<reference key="1">
    <citation type="submission" date="2002-12" db="EMBL/GenBank/DDBJ databases">
        <title>Complete genome sequence of Vibrio vulnificus CMCP6.</title>
        <authorList>
            <person name="Rhee J.H."/>
            <person name="Kim S.Y."/>
            <person name="Chung S.S."/>
            <person name="Kim J.J."/>
            <person name="Moon Y.H."/>
            <person name="Jeong H."/>
            <person name="Choy H.E."/>
        </authorList>
    </citation>
    <scope>NUCLEOTIDE SEQUENCE [LARGE SCALE GENOMIC DNA]</scope>
    <source>
        <strain>CMCP6</strain>
    </source>
</reference>
<sequence>MNNKVGLAHSLRDGQKYMDTWPMRKELSAIFPEQRIIKATRFGIKVMPAIAAISVLTQMAFNNYQALPQAIVMALFALSLPLQGMWWLGHRSNTQLPPALATWYRELHQKIVESGSALEPLKSRPRYKELAHTLNRAFRHLDKSALERWF</sequence>
<comment type="subcellular location">
    <subcellularLocation>
        <location evidence="1">Cell inner membrane</location>
        <topology evidence="1">Multi-pass membrane protein</topology>
    </subcellularLocation>
</comment>
<comment type="similarity">
    <text evidence="1">Belongs to the UPF0208 family.</text>
</comment>
<accession>Q8DAH7</accession>
<gene>
    <name type="ordered locus">VV1_2222</name>
</gene>
<keyword id="KW-0997">Cell inner membrane</keyword>
<keyword id="KW-1003">Cell membrane</keyword>
<keyword id="KW-0472">Membrane</keyword>
<keyword id="KW-0812">Transmembrane</keyword>
<keyword id="KW-1133">Transmembrane helix</keyword>
<organism>
    <name type="scientific">Vibrio vulnificus (strain CMCP6)</name>
    <dbReference type="NCBI Taxonomy" id="216895"/>
    <lineage>
        <taxon>Bacteria</taxon>
        <taxon>Pseudomonadati</taxon>
        <taxon>Pseudomonadota</taxon>
        <taxon>Gammaproteobacteria</taxon>
        <taxon>Vibrionales</taxon>
        <taxon>Vibrionaceae</taxon>
        <taxon>Vibrio</taxon>
    </lineage>
</organism>
<feature type="chain" id="PRO_0000080826" description="UPF0208 membrane protein VV1_2222">
    <location>
        <begin position="1"/>
        <end position="150"/>
    </location>
</feature>
<feature type="transmembrane region" description="Helical" evidence="1">
    <location>
        <begin position="42"/>
        <end position="62"/>
    </location>
</feature>
<feature type="transmembrane region" description="Helical" evidence="1">
    <location>
        <begin position="70"/>
        <end position="90"/>
    </location>
</feature>
<name>Y2222_VIBVU</name>
<proteinExistence type="inferred from homology"/>
<dbReference type="EMBL" id="AE016795">
    <property type="protein sequence ID" value="AAO10603.1"/>
    <property type="molecule type" value="Genomic_DNA"/>
</dbReference>
<dbReference type="KEGG" id="vvu:VV1_2222"/>
<dbReference type="HOGENOM" id="CLU_128746_0_0_6"/>
<dbReference type="Proteomes" id="UP000002275">
    <property type="component" value="Chromosome 1"/>
</dbReference>
<dbReference type="GO" id="GO:0005886">
    <property type="term" value="C:plasma membrane"/>
    <property type="evidence" value="ECO:0007669"/>
    <property type="project" value="UniProtKB-SubCell"/>
</dbReference>
<dbReference type="HAMAP" id="MF_01101">
    <property type="entry name" value="UPF0208"/>
    <property type="match status" value="1"/>
</dbReference>
<dbReference type="InterPro" id="IPR007334">
    <property type="entry name" value="UPF0208"/>
</dbReference>
<dbReference type="NCBIfam" id="NF002493">
    <property type="entry name" value="PRK01816.1"/>
    <property type="match status" value="1"/>
</dbReference>
<dbReference type="Pfam" id="PF04217">
    <property type="entry name" value="DUF412"/>
    <property type="match status" value="1"/>
</dbReference>
<evidence type="ECO:0000255" key="1">
    <source>
        <dbReference type="HAMAP-Rule" id="MF_01101"/>
    </source>
</evidence>
<protein>
    <recommendedName>
        <fullName evidence="1">UPF0208 membrane protein VV1_2222</fullName>
    </recommendedName>
</protein>